<evidence type="ECO:0000255" key="1"/>
<evidence type="ECO:0000269" key="2">
    <source>
    </source>
</evidence>
<evidence type="ECO:0000269" key="3">
    <source>
    </source>
</evidence>
<evidence type="ECO:0000269" key="4">
    <source>
    </source>
</evidence>
<evidence type="ECO:0000269" key="5">
    <source>
    </source>
</evidence>
<evidence type="ECO:0000269" key="6">
    <source>
    </source>
</evidence>
<evidence type="ECO:0000269" key="7">
    <source>
    </source>
</evidence>
<evidence type="ECO:0000269" key="8">
    <source>
    </source>
</evidence>
<evidence type="ECO:0000303" key="9">
    <source>
    </source>
</evidence>
<evidence type="ECO:0000303" key="10">
    <source>
    </source>
</evidence>
<evidence type="ECO:0000305" key="11"/>
<evidence type="ECO:0000305" key="12">
    <source>
    </source>
</evidence>
<evidence type="ECO:0000305" key="13">
    <source>
    </source>
</evidence>
<dbReference type="EMBL" id="M89774">
    <property type="protein sequence ID" value="AAA17053.1"/>
    <property type="molecule type" value="Genomic_DNA"/>
</dbReference>
<dbReference type="EMBL" id="U00007">
    <property type="protein sequence ID" value="AAA60532.1"/>
    <property type="molecule type" value="Genomic_DNA"/>
</dbReference>
<dbReference type="EMBL" id="U00096">
    <property type="protein sequence ID" value="AAC75217.1"/>
    <property type="molecule type" value="Genomic_DNA"/>
</dbReference>
<dbReference type="EMBL" id="AP009048">
    <property type="protein sequence ID" value="BAE76633.1"/>
    <property type="molecule type" value="Genomic_DNA"/>
</dbReference>
<dbReference type="PIR" id="C64984">
    <property type="entry name" value="C64984"/>
</dbReference>
<dbReference type="RefSeq" id="NP_416661.1">
    <property type="nucleotide sequence ID" value="NC_000913.3"/>
</dbReference>
<dbReference type="RefSeq" id="WP_000253273.1">
    <property type="nucleotide sequence ID" value="NZ_STEB01000002.1"/>
</dbReference>
<dbReference type="SMR" id="P25737"/>
<dbReference type="BioGRID" id="4260458">
    <property type="interactions" value="13"/>
</dbReference>
<dbReference type="FunCoup" id="P25737">
    <property type="interactions" value="264"/>
</dbReference>
<dbReference type="IntAct" id="P25737">
    <property type="interactions" value="1"/>
</dbReference>
<dbReference type="STRING" id="511145.b2156"/>
<dbReference type="TCDB" id="2.A.3.1.2">
    <property type="family name" value="the amino acid-polyamine-organocation (apc) family"/>
</dbReference>
<dbReference type="PaxDb" id="511145-b2156"/>
<dbReference type="EnsemblBacteria" id="AAC75217">
    <property type="protein sequence ID" value="AAC75217"/>
    <property type="gene ID" value="b2156"/>
</dbReference>
<dbReference type="GeneID" id="75206409"/>
<dbReference type="GeneID" id="946667"/>
<dbReference type="KEGG" id="ecj:JW2143"/>
<dbReference type="KEGG" id="eco:b2156"/>
<dbReference type="KEGG" id="ecoc:C3026_12085"/>
<dbReference type="PATRIC" id="fig|1411691.4.peg.84"/>
<dbReference type="EchoBASE" id="EB1313"/>
<dbReference type="eggNOG" id="COG0833">
    <property type="taxonomic scope" value="Bacteria"/>
</dbReference>
<dbReference type="HOGENOM" id="CLU_007946_9_2_6"/>
<dbReference type="InParanoid" id="P25737"/>
<dbReference type="OMA" id="AMFSTAN"/>
<dbReference type="OrthoDB" id="5297508at2"/>
<dbReference type="PhylomeDB" id="P25737"/>
<dbReference type="BioCyc" id="EcoCyc:LYSP-MONOMER"/>
<dbReference type="BioCyc" id="MetaCyc:LYSP-MONOMER"/>
<dbReference type="PRO" id="PR:P25737"/>
<dbReference type="Proteomes" id="UP000000625">
    <property type="component" value="Chromosome"/>
</dbReference>
<dbReference type="GO" id="GO:0016020">
    <property type="term" value="C:membrane"/>
    <property type="evidence" value="ECO:0000318"/>
    <property type="project" value="GO_Central"/>
</dbReference>
<dbReference type="GO" id="GO:0005886">
    <property type="term" value="C:plasma membrane"/>
    <property type="evidence" value="ECO:0000314"/>
    <property type="project" value="EcoCyc"/>
</dbReference>
<dbReference type="GO" id="GO:0015171">
    <property type="term" value="F:amino acid transmembrane transporter activity"/>
    <property type="evidence" value="ECO:0000318"/>
    <property type="project" value="GO_Central"/>
</dbReference>
<dbReference type="GO" id="GO:0042802">
    <property type="term" value="F:identical protein binding"/>
    <property type="evidence" value="ECO:0000314"/>
    <property type="project" value="EcoCyc"/>
</dbReference>
<dbReference type="GO" id="GO:0015189">
    <property type="term" value="F:L-lysine transmembrane transporter activity"/>
    <property type="evidence" value="ECO:0000315"/>
    <property type="project" value="EcoCyc"/>
</dbReference>
<dbReference type="GO" id="GO:0003333">
    <property type="term" value="P:amino acid transmembrane transport"/>
    <property type="evidence" value="ECO:0000318"/>
    <property type="project" value="GO_Central"/>
</dbReference>
<dbReference type="GO" id="GO:0097639">
    <property type="term" value="P:L-lysine import across plasma membrane"/>
    <property type="evidence" value="ECO:0000315"/>
    <property type="project" value="EcoCyc"/>
</dbReference>
<dbReference type="GO" id="GO:0043200">
    <property type="term" value="P:response to amino acid"/>
    <property type="evidence" value="ECO:0000270"/>
    <property type="project" value="EcoCyc"/>
</dbReference>
<dbReference type="FunFam" id="1.20.1740.10:FF:000001">
    <property type="entry name" value="Amino acid permease"/>
    <property type="match status" value="1"/>
</dbReference>
<dbReference type="Gene3D" id="1.20.1740.10">
    <property type="entry name" value="Amino acid/polyamine transporter I"/>
    <property type="match status" value="1"/>
</dbReference>
<dbReference type="InterPro" id="IPR004841">
    <property type="entry name" value="AA-permease/SLC12A_dom"/>
</dbReference>
<dbReference type="InterPro" id="IPR004840">
    <property type="entry name" value="Amino_acid_permease_CS"/>
</dbReference>
<dbReference type="InterPro" id="IPR050524">
    <property type="entry name" value="APC_YAT"/>
</dbReference>
<dbReference type="NCBIfam" id="NF008094">
    <property type="entry name" value="PRK10836.1"/>
    <property type="match status" value="1"/>
</dbReference>
<dbReference type="PANTHER" id="PTHR43341">
    <property type="entry name" value="AMINO ACID PERMEASE"/>
    <property type="match status" value="1"/>
</dbReference>
<dbReference type="PANTHER" id="PTHR43341:SF1">
    <property type="entry name" value="GENERAL AMINO-ACID PERMEASE GAP1"/>
    <property type="match status" value="1"/>
</dbReference>
<dbReference type="Pfam" id="PF00324">
    <property type="entry name" value="AA_permease"/>
    <property type="match status" value="1"/>
</dbReference>
<dbReference type="PIRSF" id="PIRSF006060">
    <property type="entry name" value="AA_transporter"/>
    <property type="match status" value="1"/>
</dbReference>
<dbReference type="PROSITE" id="PS00218">
    <property type="entry name" value="AMINO_ACID_PERMEASE_1"/>
    <property type="match status" value="1"/>
</dbReference>
<comment type="function">
    <text evidence="2 4 6">Permease involved in lysine uptake (PubMed:1315732, PubMed:24056175). In addition, functions as a lysine sensor that mediates the lysine-dependent regulation of the transcriptional activator CadC (PubMed:18086202, PubMed:24056175). In the absence of lysine, or at low lysine concentrations, LysP inhibits CadC by an interaction with the transmembrane domain of CadC. In the presence of lysine, LysP loses its ability to interact with and inhibit CadC, and acts as a lysine permease (PubMed:18086202, PubMed:24056175).</text>
</comment>
<comment type="catalytic activity">
    <reaction evidence="12 13">
        <text>L-lysine(out) + H(+)(out) = L-lysine(in) + H(+)(in)</text>
        <dbReference type="Rhea" id="RHEA:28911"/>
        <dbReference type="ChEBI" id="CHEBI:15378"/>
        <dbReference type="ChEBI" id="CHEBI:32551"/>
    </reaction>
    <physiologicalReaction direction="left-to-right" evidence="12 13">
        <dbReference type="Rhea" id="RHEA:28912"/>
    </physiologicalReaction>
</comment>
<comment type="biophysicochemical properties">
    <kinetics>
        <KM evidence="6">2.5 uM for lysine</KM>
        <Vmax evidence="6">39.5 nmol/min/mg enzyme</Vmax>
    </kinetics>
</comment>
<comment type="subunit">
    <text evidence="4 6">Interacts strongly with the transcriptional activator CadC in the absence of lysine or at low lysine concentrations (PubMed:18086202, PubMed:24056175). Interaction is markedly attenuated under increasing lysine levels (PubMed:24056175). Concomitant pH-dependent protonation of periplasmic amino acids in both proteins dissolves their electrostatic connections resulting in further destabilization of the CadC/LysP interaction (PubMed:24056175). Low pH promotes oligomerization of LysP (PubMed:24056175).</text>
</comment>
<comment type="interaction">
    <interactant intactId="EBI-6401655">
        <id>P25737</id>
    </interactant>
    <interactant intactId="EBI-6401662">
        <id>P23890</id>
        <label>cadC</label>
    </interactant>
    <organismsDiffer>false</organismsDiffer>
    <experiments>2</experiments>
</comment>
<comment type="subcellular location">
    <subcellularLocation>
        <location evidence="3 7">Cell inner membrane</location>
        <topology evidence="7">Multi-pass membrane protein</topology>
    </subcellularLocation>
</comment>
<comment type="induction">
    <text evidence="5 8">Expression is repressed by high external lysine concentrations (PubMed:21441513, PubMed:8808945). The HTH-type transcriptional regulator ArgP is the main regulator of lysP transcription (PubMed:21441513). Under lysine-limiting growth conditions, ArgP functions as a transcriptional activator by binding directly to the lysP promoter region (PubMed:21441513). In the presence of lysine, Lys-loaded ArgP may prevent expression of the gene (PubMed:21441513). In addition, expression is activated by the global regulator Lrp under lysine-limiting conditions (PubMed:21441513). Expression is not affected by pH (PubMed:8808945).</text>
</comment>
<comment type="similarity">
    <text evidence="11">Belongs to the amino acid-polyamine-organocation (APC) superfamily. Amino acid transporter (AAT) (TC 2.A.3.1) family.</text>
</comment>
<reference key="1">
    <citation type="journal article" date="1992" name="J. Bacteriol.">
        <title>The lysP gene encodes the lysine-specific permease.</title>
        <authorList>
            <person name="Steffes C."/>
            <person name="Ellis J."/>
            <person name="Wu J."/>
            <person name="Rosen B.P."/>
        </authorList>
    </citation>
    <scope>NUCLEOTIDE SEQUENCE [GENOMIC DNA]</scope>
    <scope>FUNCTION AS A PERMEASE</scope>
    <source>
        <strain>BPR2</strain>
    </source>
</reference>
<reference key="2">
    <citation type="submission" date="1994-04" db="EMBL/GenBank/DDBJ databases">
        <authorList>
            <person name="Rosen B.P."/>
        </authorList>
    </citation>
    <scope>SEQUENCE REVISION</scope>
</reference>
<reference key="3">
    <citation type="submission" date="1993-10" db="EMBL/GenBank/DDBJ databases">
        <title>Automated multiplex sequencing of the E.coli genome.</title>
        <authorList>
            <person name="Richterich P."/>
            <person name="Lakey N."/>
            <person name="Gryan G."/>
            <person name="Jaehn L."/>
            <person name="Mintz L."/>
            <person name="Robison K."/>
            <person name="Church G.M."/>
        </authorList>
    </citation>
    <scope>NUCLEOTIDE SEQUENCE [LARGE SCALE GENOMIC DNA]</scope>
    <source>
        <strain>K12 / BHB2600</strain>
    </source>
</reference>
<reference key="4">
    <citation type="journal article" date="1997" name="Science">
        <title>The complete genome sequence of Escherichia coli K-12.</title>
        <authorList>
            <person name="Blattner F.R."/>
            <person name="Plunkett G. III"/>
            <person name="Bloch C.A."/>
            <person name="Perna N.T."/>
            <person name="Burland V."/>
            <person name="Riley M."/>
            <person name="Collado-Vides J."/>
            <person name="Glasner J.D."/>
            <person name="Rode C.K."/>
            <person name="Mayhew G.F."/>
            <person name="Gregor J."/>
            <person name="Davis N.W."/>
            <person name="Kirkpatrick H.A."/>
            <person name="Goeden M.A."/>
            <person name="Rose D.J."/>
            <person name="Mau B."/>
            <person name="Shao Y."/>
        </authorList>
    </citation>
    <scope>NUCLEOTIDE SEQUENCE [LARGE SCALE GENOMIC DNA]</scope>
    <source>
        <strain>K12 / MG1655 / ATCC 47076</strain>
    </source>
</reference>
<reference key="5">
    <citation type="journal article" date="2006" name="Mol. Syst. Biol.">
        <title>Highly accurate genome sequences of Escherichia coli K-12 strains MG1655 and W3110.</title>
        <authorList>
            <person name="Hayashi K."/>
            <person name="Morooka N."/>
            <person name="Yamamoto Y."/>
            <person name="Fujita K."/>
            <person name="Isono K."/>
            <person name="Choi S."/>
            <person name="Ohtsubo E."/>
            <person name="Baba T."/>
            <person name="Wanner B.L."/>
            <person name="Mori H."/>
            <person name="Horiuchi T."/>
        </authorList>
    </citation>
    <scope>NUCLEOTIDE SEQUENCE [LARGE SCALE GENOMIC DNA]</scope>
    <source>
        <strain>K12 / W3110 / ATCC 27325 / DSM 5911</strain>
    </source>
</reference>
<reference key="6">
    <citation type="journal article" date="1995" name="Microbiology">
        <title>Topological analysis of the lysine-specific permease of Escherichia coli.</title>
        <authorList>
            <person name="Ellis J."/>
            <person name="Carlin A."/>
            <person name="Steffes C."/>
            <person name="Wu J."/>
            <person name="Liu J."/>
            <person name="Rosen B.P."/>
        </authorList>
    </citation>
    <scope>PROTEIN SEQUENCE OF 2-7</scope>
    <scope>SUBCELLULAR LOCATION</scope>
    <scope>TOPOLOGY</scope>
</reference>
<reference key="7">
    <citation type="journal article" date="1996" name="J. Bacteriol.">
        <title>Kinetics of expression of the Escherichia coli cad operon as a function of pH and lysine.</title>
        <authorList>
            <person name="Neely M.N."/>
            <person name="Olson E.R."/>
        </authorList>
    </citation>
    <scope>INDUCTION</scope>
</reference>
<reference key="8">
    <citation type="journal article" date="2005" name="Science">
        <title>Global topology analysis of the Escherichia coli inner membrane proteome.</title>
        <authorList>
            <person name="Daley D.O."/>
            <person name="Rapp M."/>
            <person name="Granseth E."/>
            <person name="Melen K."/>
            <person name="Drew D."/>
            <person name="von Heijne G."/>
        </authorList>
    </citation>
    <scope>SUBCELLULAR LOCATION</scope>
    <scope>TOPOLOGY [LARGE SCALE ANALYSIS]</scope>
    <source>
        <strain>K12 / MG1655 / ATCC 47076</strain>
    </source>
</reference>
<reference key="9">
    <citation type="journal article" date="2008" name="Mol. Microbiol.">
        <title>The membrane-integrated transcriptional activator CadC of Escherichia coli senses lysine indirectly via the interaction with the lysine permease LysP.</title>
        <authorList>
            <person name="Tetsch L."/>
            <person name="Koller C."/>
            <person name="Haneburger I."/>
            <person name="Jung K."/>
        </authorList>
    </citation>
    <scope>FUNCTION AS A LYSINE SENSOR</scope>
    <scope>INTERACTION WITH CADC</scope>
</reference>
<reference key="10">
    <citation type="journal article" date="2011" name="J. Bacteriol.">
        <title>Identification of ArgP and Lrp as transcriptional regulators of lysP, the gene encoding the specific lysine permease of Escherichia coli.</title>
        <authorList>
            <person name="Ruiz J."/>
            <person name="Haneburger I."/>
            <person name="Jung K."/>
        </authorList>
    </citation>
    <scope>TRANSCRIPTIONAL REGULATION BY ARGP AND LRP</scope>
    <source>
        <strain>K12 / MG1655 / ATCC 47076</strain>
    </source>
</reference>
<reference key="11">
    <citation type="journal article" date="2014" name="J. Mol. Biol.">
        <title>New insights into the interplay between the lysine transporter LysP and the pH sensor CadC in Escherichia coli.</title>
        <authorList>
            <person name="Rauschmeier M."/>
            <person name="Schueppel V."/>
            <person name="Tetsch L."/>
            <person name="Jung K."/>
        </authorList>
    </citation>
    <scope>FUNCTION</scope>
    <scope>BIOPHYSICOCHEMICAL PROPERTIES</scope>
    <scope>SUBUNIT</scope>
    <scope>INTERACTION WITH CADC</scope>
    <scope>MUTAGENESIS OF TYR-102; TRP-106; LYS-163; PHE-216; GLU-222; GLU-230; ASP-275; ASP-278; GLU-438; ASP-443 AND ASP-446</scope>
</reference>
<feature type="initiator methionine" description="Removed" evidence="7">
    <location>
        <position position="1"/>
    </location>
</feature>
<feature type="chain" id="PRO_0000054204" description="Lysine-specific permease LysP">
    <location>
        <begin position="2"/>
        <end position="489"/>
    </location>
</feature>
<feature type="topological domain" description="Cytoplasmic" evidence="7">
    <location>
        <begin position="2"/>
        <end position="22"/>
    </location>
</feature>
<feature type="transmembrane region" description="Helical" evidence="1">
    <location>
        <begin position="23"/>
        <end position="43"/>
    </location>
</feature>
<feature type="topological domain" description="Periplasmic" evidence="7">
    <location>
        <begin position="44"/>
        <end position="45"/>
    </location>
</feature>
<feature type="transmembrane region" description="Helical" evidence="1">
    <location>
        <begin position="46"/>
        <end position="66"/>
    </location>
</feature>
<feature type="topological domain" description="Cytoplasmic" evidence="7">
    <location>
        <begin position="67"/>
        <end position="105"/>
    </location>
</feature>
<feature type="transmembrane region" description="Helical" evidence="1">
    <location>
        <begin position="106"/>
        <end position="126"/>
    </location>
</feature>
<feature type="topological domain" description="Periplasmic" evidence="7">
    <location>
        <begin position="127"/>
        <end position="128"/>
    </location>
</feature>
<feature type="transmembrane region" description="Helical" evidence="1">
    <location>
        <begin position="129"/>
        <end position="149"/>
    </location>
</feature>
<feature type="topological domain" description="Cytoplasmic" evidence="7">
    <location>
        <begin position="150"/>
        <end position="161"/>
    </location>
</feature>
<feature type="transmembrane region" description="Helical" evidence="1">
    <location>
        <begin position="162"/>
        <end position="182"/>
    </location>
</feature>
<feature type="topological domain" description="Periplasmic" evidence="7">
    <location>
        <begin position="183"/>
        <end position="197"/>
    </location>
</feature>
<feature type="transmembrane region" description="Helical" evidence="1">
    <location>
        <begin position="198"/>
        <end position="218"/>
    </location>
</feature>
<feature type="topological domain" description="Cytoplasmic" evidence="7">
    <location>
        <begin position="219"/>
        <end position="244"/>
    </location>
</feature>
<feature type="transmembrane region" description="Helical" evidence="1">
    <location>
        <begin position="245"/>
        <end position="265"/>
    </location>
</feature>
<feature type="topological domain" description="Periplasmic" evidence="7">
    <location>
        <begin position="266"/>
        <end position="290"/>
    </location>
</feature>
<feature type="transmembrane region" description="Helical" evidence="1">
    <location>
        <begin position="291"/>
        <end position="311"/>
    </location>
</feature>
<feature type="topological domain" description="Cytoplasmic" evidence="7">
    <location>
        <begin position="312"/>
        <end position="346"/>
    </location>
</feature>
<feature type="transmembrane region" description="Helical" evidence="1">
    <location>
        <begin position="347"/>
        <end position="367"/>
    </location>
</feature>
<feature type="topological domain" description="Periplasmic" evidence="7">
    <location>
        <begin position="368"/>
        <end position="370"/>
    </location>
</feature>
<feature type="transmembrane region" description="Helical" evidence="1">
    <location>
        <begin position="371"/>
        <end position="391"/>
    </location>
</feature>
<feature type="topological domain" description="Cytoplasmic" evidence="7">
    <location>
        <begin position="392"/>
        <end position="413"/>
    </location>
</feature>
<feature type="transmembrane region" description="Helical" evidence="1">
    <location>
        <begin position="414"/>
        <end position="434"/>
    </location>
</feature>
<feature type="topological domain" description="Periplasmic" evidence="7">
    <location>
        <begin position="435"/>
        <end position="446"/>
    </location>
</feature>
<feature type="transmembrane region" description="Helical" evidence="1">
    <location>
        <begin position="447"/>
        <end position="467"/>
    </location>
</feature>
<feature type="topological domain" description="Cytoplasmic" evidence="3 7">
    <location>
        <begin position="468"/>
        <end position="489"/>
    </location>
</feature>
<feature type="site" description="Essential for the stimulus-dependent interaction with CadC" evidence="6">
    <location>
        <position position="275"/>
    </location>
</feature>
<feature type="site" description="Essential for the stimulus-dependent interaction with CadC" evidence="6">
    <location>
        <position position="278"/>
    </location>
</feature>
<feature type="mutagenesis site" description="Retains 4% of wild-type lysine uptake activity. Increases the capacity to inhibit CadC in the presence of lysine." evidence="6">
    <original>Y</original>
    <variation>L</variation>
    <location>
        <position position="102"/>
    </location>
</feature>
<feature type="mutagenesis site" description="Retains 20% of wild-type lysine uptake activity. Increases the capacity to inhibit CadC in the presence of lysine." evidence="6">
    <original>W</original>
    <variation>L</variation>
    <location>
        <position position="106"/>
    </location>
</feature>
<feature type="mutagenesis site" description="Retains 24% of wild-type lysine uptake activity. Increases the capacity to inhibit CadC in the presence of lysine." evidence="6">
    <original>K</original>
    <variation>A</variation>
    <location>
        <position position="163"/>
    </location>
</feature>
<feature type="mutagenesis site" description="Retains 13% of wild-type lysine uptake activity. Increases the capacity to inhibit CadC in the presence of lysine." evidence="6">
    <original>F</original>
    <variation>L</variation>
    <location>
        <position position="216"/>
    </location>
</feature>
<feature type="mutagenesis site" description="Abolishes lysine uptake. Strongly inhibits CadC." evidence="6">
    <original>E</original>
    <variation>A</variation>
    <location>
        <position position="222"/>
    </location>
</feature>
<feature type="mutagenesis site" description="Abolishes lysine uptake. Shows significant less inhibition of CadC." evidence="6">
    <original>E</original>
    <variation>V</variation>
    <location>
        <position position="230"/>
    </location>
</feature>
<feature type="mutagenesis site" description="Retains 88% of wild-type lysine uptake activity, but can hardly inhibit CadC. Cannot interact with CadC; when associated with A-278." evidence="6">
    <original>D</original>
    <variation>A</variation>
    <location>
        <position position="275"/>
    </location>
</feature>
<feature type="mutagenesis site" description="Retains 88% of wild-type lysine uptake activity, but can hardly inhibit CadC. Cannot interact with CadC; when associated with A-275." evidence="6">
    <original>D</original>
    <variation>A</variation>
    <location>
        <position position="278"/>
    </location>
</feature>
<feature type="mutagenesis site" description="Retains 14% of wild-type lysine uptake activity. Is unable to inhibit CadC." evidence="6">
    <original>E</original>
    <variation>A</variation>
    <location>
        <position position="438"/>
    </location>
</feature>
<feature type="mutagenesis site" description="Retains 11% of wild-type lysine uptake activity. Is unable to inhibit CadC." evidence="6">
    <original>D</original>
    <variation>A</variation>
    <location>
        <position position="443"/>
    </location>
</feature>
<feature type="mutagenesis site" description="Retains 13% of wild-type lysine uptake activity. Is unable to inhibit CadC." evidence="6">
    <original>D</original>
    <variation>A</variation>
    <location>
        <position position="446"/>
    </location>
</feature>
<feature type="sequence conflict" description="In Ref. 3; AAA60532." evidence="11" ref="3">
    <original>S</original>
    <variation>N</variation>
    <location>
        <position position="122"/>
    </location>
</feature>
<gene>
    <name evidence="9" type="primary">lysP</name>
    <name type="synonym">cadR</name>
    <name type="ordered locus">b2156</name>
    <name type="ordered locus">JW2143</name>
</gene>
<proteinExistence type="evidence at protein level"/>
<accession>P25737</accession>
<accession>Q2MAS3</accession>
<protein>
    <recommendedName>
        <fullName evidence="9">Lysine-specific permease LysP</fullName>
    </recommendedName>
    <alternativeName>
        <fullName evidence="10">Lysine transporter LysP</fullName>
    </alternativeName>
    <alternativeName>
        <fullName evidence="10">Trigger transporter LysP</fullName>
    </alternativeName>
</protein>
<sequence>MVSETKTTEAPGLRRELKARHLTMIAIGGSIGTGLFVASGATISQAGPGGALLSYMLIGLMVYFLMTSLGELAAYMPVSGSFATYGQNYVEEGFGFALGWNYWYNWAVTIAVDLVAAQLVMSWWFPDTPGWIWSALFLGVIFLLNYISVRGFGEAEYWFSLIKVTTVIVFIIVGVLMIIGIFKGAQPAGWSNWTIGEAPFAGGFAAMIGVAMIVGFSFQGTELIGIAAGESEDPAKNIPRAVRQVFWRILLFYVFAILIISLIIPYTDPSLLRNDVKDISVSPFTLVFQHAGLLSAAAVMNAVILTAVLSAGNSGMYASTRMLYTLACDGKAPRIFAKLSRGGVPRNALYATTVIAGLCFLTSMFGNQTVYLWLLNTSGMTGFIAWLGIAISHYRFRRGYVLQGHDINDLPYRSGFFPLGPIFAFILCLIITLGQNYEAFLKDTIDWGGVAATYIGIPLFLIIWFGYKLIKGTHFVRYSEMKFPQNDKK</sequence>
<organism>
    <name type="scientific">Escherichia coli (strain K12)</name>
    <dbReference type="NCBI Taxonomy" id="83333"/>
    <lineage>
        <taxon>Bacteria</taxon>
        <taxon>Pseudomonadati</taxon>
        <taxon>Pseudomonadota</taxon>
        <taxon>Gammaproteobacteria</taxon>
        <taxon>Enterobacterales</taxon>
        <taxon>Enterobacteriaceae</taxon>
        <taxon>Escherichia</taxon>
    </lineage>
</organism>
<name>LYSP_ECOLI</name>
<keyword id="KW-0029">Amino-acid transport</keyword>
<keyword id="KW-0997">Cell inner membrane</keyword>
<keyword id="KW-1003">Cell membrane</keyword>
<keyword id="KW-0903">Direct protein sequencing</keyword>
<keyword id="KW-0472">Membrane</keyword>
<keyword id="KW-1185">Reference proteome</keyword>
<keyword id="KW-0812">Transmembrane</keyword>
<keyword id="KW-1133">Transmembrane helix</keyword>
<keyword id="KW-0813">Transport</keyword>